<feature type="chain" id="PRO_0000129863" description="Small ribosomal subunit protein uS19">
    <location>
        <begin position="1"/>
        <end position="91"/>
    </location>
</feature>
<evidence type="ECO:0000250" key="1"/>
<evidence type="ECO:0000305" key="2"/>
<comment type="function">
    <text evidence="1">Protein S19 forms a complex with S13 that binds strongly to the 16S ribosomal RNA.</text>
</comment>
<comment type="similarity">
    <text evidence="2">Belongs to the universal ribosomal protein uS19 family.</text>
</comment>
<name>RS19_MYCPU</name>
<organism>
    <name type="scientific">Mycoplasmopsis pulmonis (strain UAB CTIP)</name>
    <name type="common">Mycoplasma pulmonis</name>
    <dbReference type="NCBI Taxonomy" id="272635"/>
    <lineage>
        <taxon>Bacteria</taxon>
        <taxon>Bacillati</taxon>
        <taxon>Mycoplasmatota</taxon>
        <taxon>Mycoplasmoidales</taxon>
        <taxon>Metamycoplasmataceae</taxon>
        <taxon>Mycoplasmopsis</taxon>
    </lineage>
</organism>
<keyword id="KW-1185">Reference proteome</keyword>
<keyword id="KW-0687">Ribonucleoprotein</keyword>
<keyword id="KW-0689">Ribosomal protein</keyword>
<keyword id="KW-0694">RNA-binding</keyword>
<keyword id="KW-0699">rRNA-binding</keyword>
<protein>
    <recommendedName>
        <fullName evidence="2">Small ribosomal subunit protein uS19</fullName>
    </recommendedName>
    <alternativeName>
        <fullName>30S ribosomal protein S19</fullName>
    </alternativeName>
</protein>
<gene>
    <name type="primary">rpsS</name>
    <name type="ordered locus">MYPU_5840</name>
</gene>
<accession>Q98PY5</accession>
<proteinExistence type="inferred from homology"/>
<sequence>MARSLKKGPFADEHLLKKVEKAIESKSRKPIKTWSRRSTIFPDFVNLTFQVHNGKNFIDVFVTDDMVGHKLGEFAPTRTFGGHGEDKRKKK</sequence>
<dbReference type="EMBL" id="AL445565">
    <property type="protein sequence ID" value="CAC13757.1"/>
    <property type="molecule type" value="Genomic_DNA"/>
</dbReference>
<dbReference type="PIR" id="H90584">
    <property type="entry name" value="H90584"/>
</dbReference>
<dbReference type="RefSeq" id="WP_010925385.1">
    <property type="nucleotide sequence ID" value="NC_002771.1"/>
</dbReference>
<dbReference type="SMR" id="Q98PY5"/>
<dbReference type="STRING" id="272635.gene:17577191"/>
<dbReference type="KEGG" id="mpu:MYPU_5840"/>
<dbReference type="eggNOG" id="COG0185">
    <property type="taxonomic scope" value="Bacteria"/>
</dbReference>
<dbReference type="HOGENOM" id="CLU_144911_0_1_14"/>
<dbReference type="BioCyc" id="MPUL272635:G1GT6-596-MONOMER"/>
<dbReference type="Proteomes" id="UP000000528">
    <property type="component" value="Chromosome"/>
</dbReference>
<dbReference type="GO" id="GO:0005737">
    <property type="term" value="C:cytoplasm"/>
    <property type="evidence" value="ECO:0007669"/>
    <property type="project" value="UniProtKB-ARBA"/>
</dbReference>
<dbReference type="GO" id="GO:0015935">
    <property type="term" value="C:small ribosomal subunit"/>
    <property type="evidence" value="ECO:0007669"/>
    <property type="project" value="InterPro"/>
</dbReference>
<dbReference type="GO" id="GO:0019843">
    <property type="term" value="F:rRNA binding"/>
    <property type="evidence" value="ECO:0007669"/>
    <property type="project" value="UniProtKB-UniRule"/>
</dbReference>
<dbReference type="GO" id="GO:0003735">
    <property type="term" value="F:structural constituent of ribosome"/>
    <property type="evidence" value="ECO:0007669"/>
    <property type="project" value="InterPro"/>
</dbReference>
<dbReference type="GO" id="GO:0000028">
    <property type="term" value="P:ribosomal small subunit assembly"/>
    <property type="evidence" value="ECO:0007669"/>
    <property type="project" value="TreeGrafter"/>
</dbReference>
<dbReference type="GO" id="GO:0006412">
    <property type="term" value="P:translation"/>
    <property type="evidence" value="ECO:0007669"/>
    <property type="project" value="UniProtKB-UniRule"/>
</dbReference>
<dbReference type="FunFam" id="3.30.860.10:FF:000001">
    <property type="entry name" value="30S ribosomal protein S19"/>
    <property type="match status" value="1"/>
</dbReference>
<dbReference type="Gene3D" id="3.30.860.10">
    <property type="entry name" value="30s Ribosomal Protein S19, Chain A"/>
    <property type="match status" value="1"/>
</dbReference>
<dbReference type="HAMAP" id="MF_00531">
    <property type="entry name" value="Ribosomal_uS19"/>
    <property type="match status" value="1"/>
</dbReference>
<dbReference type="InterPro" id="IPR002222">
    <property type="entry name" value="Ribosomal_uS19"/>
</dbReference>
<dbReference type="InterPro" id="IPR005732">
    <property type="entry name" value="Ribosomal_uS19_bac-type"/>
</dbReference>
<dbReference type="InterPro" id="IPR020934">
    <property type="entry name" value="Ribosomal_uS19_CS"/>
</dbReference>
<dbReference type="InterPro" id="IPR023575">
    <property type="entry name" value="Ribosomal_uS19_SF"/>
</dbReference>
<dbReference type="NCBIfam" id="TIGR01050">
    <property type="entry name" value="rpsS_bact"/>
    <property type="match status" value="1"/>
</dbReference>
<dbReference type="PANTHER" id="PTHR11880">
    <property type="entry name" value="RIBOSOMAL PROTEIN S19P FAMILY MEMBER"/>
    <property type="match status" value="1"/>
</dbReference>
<dbReference type="PANTHER" id="PTHR11880:SF8">
    <property type="entry name" value="SMALL RIBOSOMAL SUBUNIT PROTEIN US19M"/>
    <property type="match status" value="1"/>
</dbReference>
<dbReference type="Pfam" id="PF00203">
    <property type="entry name" value="Ribosomal_S19"/>
    <property type="match status" value="1"/>
</dbReference>
<dbReference type="PIRSF" id="PIRSF002144">
    <property type="entry name" value="Ribosomal_S19"/>
    <property type="match status" value="1"/>
</dbReference>
<dbReference type="PRINTS" id="PR00975">
    <property type="entry name" value="RIBOSOMALS19"/>
</dbReference>
<dbReference type="SUPFAM" id="SSF54570">
    <property type="entry name" value="Ribosomal protein S19"/>
    <property type="match status" value="1"/>
</dbReference>
<dbReference type="PROSITE" id="PS00323">
    <property type="entry name" value="RIBOSOMAL_S19"/>
    <property type="match status" value="1"/>
</dbReference>
<reference key="1">
    <citation type="journal article" date="2001" name="Nucleic Acids Res.">
        <title>The complete genome sequence of the murine respiratory pathogen Mycoplasma pulmonis.</title>
        <authorList>
            <person name="Chambaud I."/>
            <person name="Heilig R."/>
            <person name="Ferris S."/>
            <person name="Barbe V."/>
            <person name="Samson D."/>
            <person name="Galisson F."/>
            <person name="Moszer I."/>
            <person name="Dybvig K."/>
            <person name="Wroblewski H."/>
            <person name="Viari A."/>
            <person name="Rocha E.P.C."/>
            <person name="Blanchard A."/>
        </authorList>
    </citation>
    <scope>NUCLEOTIDE SEQUENCE [LARGE SCALE GENOMIC DNA]</scope>
    <source>
        <strain>UAB CTIP</strain>
    </source>
</reference>